<reference key="1">
    <citation type="submission" date="2008-10" db="EMBL/GenBank/DDBJ databases">
        <title>Genome sequence of Bacillus cereus AH820.</title>
        <authorList>
            <person name="Dodson R.J."/>
            <person name="Durkin A.S."/>
            <person name="Rosovitz M.J."/>
            <person name="Rasko D.A."/>
            <person name="Hoffmaster A."/>
            <person name="Ravel J."/>
            <person name="Sutton G."/>
        </authorList>
    </citation>
    <scope>NUCLEOTIDE SEQUENCE [LARGE SCALE GENOMIC DNA]</scope>
    <source>
        <strain>AH820</strain>
    </source>
</reference>
<organism>
    <name type="scientific">Bacillus cereus (strain AH820)</name>
    <dbReference type="NCBI Taxonomy" id="405535"/>
    <lineage>
        <taxon>Bacteria</taxon>
        <taxon>Bacillati</taxon>
        <taxon>Bacillota</taxon>
        <taxon>Bacilli</taxon>
        <taxon>Bacillales</taxon>
        <taxon>Bacillaceae</taxon>
        <taxon>Bacillus</taxon>
        <taxon>Bacillus cereus group</taxon>
    </lineage>
</organism>
<proteinExistence type="inferred from homology"/>
<comment type="function">
    <text evidence="1">Catalyzes the isomerization between 2-isopropylmalate and 3-isopropylmalate, via the formation of 2-isopropylmaleate.</text>
</comment>
<comment type="catalytic activity">
    <reaction evidence="1">
        <text>(2R,3S)-3-isopropylmalate = (2S)-2-isopropylmalate</text>
        <dbReference type="Rhea" id="RHEA:32287"/>
        <dbReference type="ChEBI" id="CHEBI:1178"/>
        <dbReference type="ChEBI" id="CHEBI:35121"/>
        <dbReference type="EC" id="4.2.1.33"/>
    </reaction>
</comment>
<comment type="cofactor">
    <cofactor evidence="1">
        <name>[4Fe-4S] cluster</name>
        <dbReference type="ChEBI" id="CHEBI:49883"/>
    </cofactor>
    <text evidence="1">Binds 1 [4Fe-4S] cluster per subunit.</text>
</comment>
<comment type="pathway">
    <text evidence="1">Amino-acid biosynthesis; L-leucine biosynthesis; L-leucine from 3-methyl-2-oxobutanoate: step 2/4.</text>
</comment>
<comment type="subunit">
    <text evidence="1">Heterodimer of LeuC and LeuD.</text>
</comment>
<comment type="similarity">
    <text evidence="1">Belongs to the aconitase/IPM isomerase family. LeuC type 1 subfamily.</text>
</comment>
<gene>
    <name evidence="1" type="primary">leuC</name>
    <name type="ordered locus">BCAH820_1493</name>
</gene>
<sequence>MGKRLLDKLWERHVVTTNENGLDLLYIDLHLVHEVTSPQAFEGLRLTNRTVRRPDLTFATMDHNIPTKDVWNITDRIAKQQLDMLRENCKQFQVPLADIGDEEQGIVHVIGPELGLTQPGKTIVCGDSHTATHGAFGALAFGIGTSEVEHVLATQTLWQRKPKAMGIELKGKLQKGVYAKDIILHLLSKYGVAVGTGYVMEFYGETIGTMEMEERMTLCNMAIEGGAKAGIIAPDEKTFAYVKGRKYAPRDYETFEKKWFELYTDADAIYDLHISIDVTDLAPYVTWGTNPSMGVRIDEKLPEKHDVNDERAFSYMGLIPGQSTYDIPVQHVFIGSCTNSRLSDLEIAASVVKGRKVKEGVRALVVPGSKRVRDAAMQKGLHHIFEEAGFEWREPGCSMCLGMNPDQVPEGEHCASTSNRNFEGRQGKGARTHLVSPAMAAAAALYGHFVDIRKESYDGAISYS</sequence>
<evidence type="ECO:0000255" key="1">
    <source>
        <dbReference type="HAMAP-Rule" id="MF_01026"/>
    </source>
</evidence>
<accession>B7JFY7</accession>
<name>LEUC_BACC0</name>
<keyword id="KW-0004">4Fe-4S</keyword>
<keyword id="KW-0028">Amino-acid biosynthesis</keyword>
<keyword id="KW-0100">Branched-chain amino acid biosynthesis</keyword>
<keyword id="KW-0408">Iron</keyword>
<keyword id="KW-0411">Iron-sulfur</keyword>
<keyword id="KW-0432">Leucine biosynthesis</keyword>
<keyword id="KW-0456">Lyase</keyword>
<keyword id="KW-0479">Metal-binding</keyword>
<dbReference type="EC" id="4.2.1.33" evidence="1"/>
<dbReference type="EMBL" id="CP001283">
    <property type="protein sequence ID" value="ACK91315.1"/>
    <property type="molecule type" value="Genomic_DNA"/>
</dbReference>
<dbReference type="RefSeq" id="WP_000520126.1">
    <property type="nucleotide sequence ID" value="NC_011773.1"/>
</dbReference>
<dbReference type="SMR" id="B7JFY7"/>
<dbReference type="KEGG" id="bcu:BCAH820_1493"/>
<dbReference type="HOGENOM" id="CLU_006714_3_4_9"/>
<dbReference type="UniPathway" id="UPA00048">
    <property type="reaction ID" value="UER00071"/>
</dbReference>
<dbReference type="Proteomes" id="UP000001363">
    <property type="component" value="Chromosome"/>
</dbReference>
<dbReference type="GO" id="GO:0003861">
    <property type="term" value="F:3-isopropylmalate dehydratase activity"/>
    <property type="evidence" value="ECO:0007669"/>
    <property type="project" value="UniProtKB-UniRule"/>
</dbReference>
<dbReference type="GO" id="GO:0051539">
    <property type="term" value="F:4 iron, 4 sulfur cluster binding"/>
    <property type="evidence" value="ECO:0007669"/>
    <property type="project" value="UniProtKB-KW"/>
</dbReference>
<dbReference type="GO" id="GO:0046872">
    <property type="term" value="F:metal ion binding"/>
    <property type="evidence" value="ECO:0007669"/>
    <property type="project" value="UniProtKB-KW"/>
</dbReference>
<dbReference type="GO" id="GO:0009098">
    <property type="term" value="P:L-leucine biosynthetic process"/>
    <property type="evidence" value="ECO:0007669"/>
    <property type="project" value="UniProtKB-UniRule"/>
</dbReference>
<dbReference type="CDD" id="cd01583">
    <property type="entry name" value="IPMI"/>
    <property type="match status" value="1"/>
</dbReference>
<dbReference type="FunFam" id="3.30.499.10:FF:000007">
    <property type="entry name" value="3-isopropylmalate dehydratase large subunit"/>
    <property type="match status" value="1"/>
</dbReference>
<dbReference type="Gene3D" id="3.30.499.10">
    <property type="entry name" value="Aconitase, domain 3"/>
    <property type="match status" value="2"/>
</dbReference>
<dbReference type="HAMAP" id="MF_01026">
    <property type="entry name" value="LeuC_type1"/>
    <property type="match status" value="1"/>
</dbReference>
<dbReference type="InterPro" id="IPR004430">
    <property type="entry name" value="3-IsopropMal_deHydase_lsu"/>
</dbReference>
<dbReference type="InterPro" id="IPR015931">
    <property type="entry name" value="Acnase/IPM_dHydase_lsu_aba_1/3"/>
</dbReference>
<dbReference type="InterPro" id="IPR001030">
    <property type="entry name" value="Acoase/IPM_deHydtase_lsu_aba"/>
</dbReference>
<dbReference type="InterPro" id="IPR018136">
    <property type="entry name" value="Aconitase_4Fe-4S_BS"/>
</dbReference>
<dbReference type="InterPro" id="IPR036008">
    <property type="entry name" value="Aconitase_4Fe-4S_dom"/>
</dbReference>
<dbReference type="InterPro" id="IPR050067">
    <property type="entry name" value="IPM_dehydratase_rel_enz"/>
</dbReference>
<dbReference type="InterPro" id="IPR033941">
    <property type="entry name" value="IPMI_cat"/>
</dbReference>
<dbReference type="NCBIfam" id="TIGR00170">
    <property type="entry name" value="leuC"/>
    <property type="match status" value="1"/>
</dbReference>
<dbReference type="NCBIfam" id="NF004016">
    <property type="entry name" value="PRK05478.1"/>
    <property type="match status" value="1"/>
</dbReference>
<dbReference type="NCBIfam" id="NF009116">
    <property type="entry name" value="PRK12466.1"/>
    <property type="match status" value="1"/>
</dbReference>
<dbReference type="PANTHER" id="PTHR43822:SF9">
    <property type="entry name" value="3-ISOPROPYLMALATE DEHYDRATASE"/>
    <property type="match status" value="1"/>
</dbReference>
<dbReference type="PANTHER" id="PTHR43822">
    <property type="entry name" value="HOMOACONITASE, MITOCHONDRIAL-RELATED"/>
    <property type="match status" value="1"/>
</dbReference>
<dbReference type="Pfam" id="PF00330">
    <property type="entry name" value="Aconitase"/>
    <property type="match status" value="1"/>
</dbReference>
<dbReference type="PRINTS" id="PR00415">
    <property type="entry name" value="ACONITASE"/>
</dbReference>
<dbReference type="SUPFAM" id="SSF53732">
    <property type="entry name" value="Aconitase iron-sulfur domain"/>
    <property type="match status" value="1"/>
</dbReference>
<dbReference type="PROSITE" id="PS00450">
    <property type="entry name" value="ACONITASE_1"/>
    <property type="match status" value="1"/>
</dbReference>
<dbReference type="PROSITE" id="PS01244">
    <property type="entry name" value="ACONITASE_2"/>
    <property type="match status" value="1"/>
</dbReference>
<feature type="chain" id="PRO_1000135666" description="3-isopropylmalate dehydratase large subunit">
    <location>
        <begin position="1"/>
        <end position="464"/>
    </location>
</feature>
<feature type="binding site" evidence="1">
    <location>
        <position position="337"/>
    </location>
    <ligand>
        <name>[4Fe-4S] cluster</name>
        <dbReference type="ChEBI" id="CHEBI:49883"/>
    </ligand>
</feature>
<feature type="binding site" evidence="1">
    <location>
        <position position="397"/>
    </location>
    <ligand>
        <name>[4Fe-4S] cluster</name>
        <dbReference type="ChEBI" id="CHEBI:49883"/>
    </ligand>
</feature>
<feature type="binding site" evidence="1">
    <location>
        <position position="400"/>
    </location>
    <ligand>
        <name>[4Fe-4S] cluster</name>
        <dbReference type="ChEBI" id="CHEBI:49883"/>
    </ligand>
</feature>
<protein>
    <recommendedName>
        <fullName evidence="1">3-isopropylmalate dehydratase large subunit</fullName>
        <ecNumber evidence="1">4.2.1.33</ecNumber>
    </recommendedName>
    <alternativeName>
        <fullName evidence="1">Alpha-IPM isomerase</fullName>
        <shortName evidence="1">IPMI</shortName>
    </alternativeName>
    <alternativeName>
        <fullName evidence="1">Isopropylmalate isomerase</fullName>
    </alternativeName>
</protein>